<reference key="1">
    <citation type="journal article" date="2006" name="Science">
        <title>Genome of rice cluster I archaea -- the key methane producers in the rice rhizosphere.</title>
        <authorList>
            <person name="Erkel C."/>
            <person name="Kube M."/>
            <person name="Reinhardt R."/>
            <person name="Liesack W."/>
        </authorList>
    </citation>
    <scope>NUCLEOTIDE SEQUENCE [LARGE SCALE GENOMIC DNA]</scope>
    <source>
        <strain>DSM 22066 / NBRC 105507 / MRE50</strain>
    </source>
</reference>
<keyword id="KW-0028">Amino-acid biosynthesis</keyword>
<keyword id="KW-0055">Arginine biosynthesis</keyword>
<keyword id="KW-0067">ATP-binding</keyword>
<keyword id="KW-0963">Cytoplasm</keyword>
<keyword id="KW-0418">Kinase</keyword>
<keyword id="KW-0547">Nucleotide-binding</keyword>
<keyword id="KW-1185">Reference proteome</keyword>
<keyword id="KW-0808">Transferase</keyword>
<feature type="chain" id="PRO_1000075325" description="Acetylglutamate kinase">
    <location>
        <begin position="1"/>
        <end position="300"/>
    </location>
</feature>
<feature type="binding site" evidence="1">
    <location>
        <begin position="68"/>
        <end position="69"/>
    </location>
    <ligand>
        <name>substrate</name>
    </ligand>
</feature>
<feature type="binding site" evidence="1">
    <location>
        <position position="90"/>
    </location>
    <ligand>
        <name>substrate</name>
    </ligand>
</feature>
<feature type="binding site" evidence="1">
    <location>
        <position position="194"/>
    </location>
    <ligand>
        <name>substrate</name>
    </ligand>
</feature>
<feature type="site" description="Transition state stabilizer" evidence="1">
    <location>
        <position position="33"/>
    </location>
</feature>
<feature type="site" description="Transition state stabilizer" evidence="1">
    <location>
        <position position="257"/>
    </location>
</feature>
<gene>
    <name evidence="1" type="primary">argB</name>
    <name type="ordered locus">UNCMA_02180</name>
    <name type="ORF">RRC322</name>
</gene>
<protein>
    <recommendedName>
        <fullName evidence="1">Acetylglutamate kinase</fullName>
        <ecNumber evidence="1">2.7.2.8</ecNumber>
    </recommendedName>
    <alternativeName>
        <fullName evidence="1">N-acetyl-L-glutamate 5-phosphotransferase</fullName>
    </alternativeName>
    <alternativeName>
        <fullName evidence="1">NAG kinase</fullName>
        <shortName evidence="1">NAGK</shortName>
    </alternativeName>
</protein>
<sequence length="300" mass="32131">MDNTSKVHKLMELAELARLPRRKEVEGAVIVIKVGGHAMVDPAARSSIIKDIVTLRELGALPVIVHGGGPEIDAMVKRMGMTPSFVAGIRVTDDETLEIVRMVLVGNVSPDIVSLIMRHGGKGVGLLGSSGSLLIARKKPMEKVKVDGKEIMVDYGWVGDTEQVNTSILMDLLDKGYIPVISPIGYDRDGHCLNLNADTVAGDIASALKAGSLVSLTDVNGVMMDPSDKSTLLSHLTEKECEDLIERGIISRGMIPKIRSSLCVLKAGAHSVHIINGNIEHALLLELLTEKGVGTRLTLK</sequence>
<dbReference type="EC" id="2.7.2.8" evidence="1"/>
<dbReference type="EMBL" id="AM114193">
    <property type="protein sequence ID" value="CAJ38048.1"/>
    <property type="molecule type" value="Genomic_DNA"/>
</dbReference>
<dbReference type="SMR" id="Q0W0P5"/>
<dbReference type="STRING" id="351160.RRC322"/>
<dbReference type="KEGG" id="rci:RRC322"/>
<dbReference type="PATRIC" id="fig|351160.9.peg.231"/>
<dbReference type="eggNOG" id="arCOG00862">
    <property type="taxonomic scope" value="Archaea"/>
</dbReference>
<dbReference type="OrthoDB" id="6816at2157"/>
<dbReference type="UniPathway" id="UPA00068">
    <property type="reaction ID" value="UER00107"/>
</dbReference>
<dbReference type="Proteomes" id="UP000000663">
    <property type="component" value="Chromosome"/>
</dbReference>
<dbReference type="GO" id="GO:0005737">
    <property type="term" value="C:cytoplasm"/>
    <property type="evidence" value="ECO:0007669"/>
    <property type="project" value="UniProtKB-SubCell"/>
</dbReference>
<dbReference type="GO" id="GO:0003991">
    <property type="term" value="F:acetylglutamate kinase activity"/>
    <property type="evidence" value="ECO:0007669"/>
    <property type="project" value="UniProtKB-UniRule"/>
</dbReference>
<dbReference type="GO" id="GO:0005524">
    <property type="term" value="F:ATP binding"/>
    <property type="evidence" value="ECO:0007669"/>
    <property type="project" value="UniProtKB-UniRule"/>
</dbReference>
<dbReference type="GO" id="GO:0042450">
    <property type="term" value="P:arginine biosynthetic process via ornithine"/>
    <property type="evidence" value="ECO:0007669"/>
    <property type="project" value="UniProtKB-UniRule"/>
</dbReference>
<dbReference type="GO" id="GO:0006526">
    <property type="term" value="P:L-arginine biosynthetic process"/>
    <property type="evidence" value="ECO:0007669"/>
    <property type="project" value="UniProtKB-UniPathway"/>
</dbReference>
<dbReference type="CDD" id="cd04250">
    <property type="entry name" value="AAK_NAGK-C"/>
    <property type="match status" value="1"/>
</dbReference>
<dbReference type="FunFam" id="3.40.1160.10:FF:000004">
    <property type="entry name" value="Acetylglutamate kinase"/>
    <property type="match status" value="1"/>
</dbReference>
<dbReference type="Gene3D" id="3.40.1160.10">
    <property type="entry name" value="Acetylglutamate kinase-like"/>
    <property type="match status" value="1"/>
</dbReference>
<dbReference type="HAMAP" id="MF_00082">
    <property type="entry name" value="ArgB"/>
    <property type="match status" value="1"/>
</dbReference>
<dbReference type="InterPro" id="IPR036393">
    <property type="entry name" value="AceGlu_kinase-like_sf"/>
</dbReference>
<dbReference type="InterPro" id="IPR004662">
    <property type="entry name" value="AcgluKinase_fam"/>
</dbReference>
<dbReference type="InterPro" id="IPR037528">
    <property type="entry name" value="ArgB"/>
</dbReference>
<dbReference type="InterPro" id="IPR001048">
    <property type="entry name" value="Asp/Glu/Uridylate_kinase"/>
</dbReference>
<dbReference type="InterPro" id="IPR001057">
    <property type="entry name" value="Glu/AcGlu_kinase"/>
</dbReference>
<dbReference type="InterPro" id="IPR041727">
    <property type="entry name" value="NAGK-C"/>
</dbReference>
<dbReference type="NCBIfam" id="TIGR00761">
    <property type="entry name" value="argB"/>
    <property type="match status" value="1"/>
</dbReference>
<dbReference type="PANTHER" id="PTHR23342">
    <property type="entry name" value="N-ACETYLGLUTAMATE SYNTHASE"/>
    <property type="match status" value="1"/>
</dbReference>
<dbReference type="PANTHER" id="PTHR23342:SF0">
    <property type="entry name" value="N-ACETYLGLUTAMATE SYNTHASE, MITOCHONDRIAL"/>
    <property type="match status" value="1"/>
</dbReference>
<dbReference type="Pfam" id="PF00696">
    <property type="entry name" value="AA_kinase"/>
    <property type="match status" value="1"/>
</dbReference>
<dbReference type="PIRSF" id="PIRSF000728">
    <property type="entry name" value="NAGK"/>
    <property type="match status" value="1"/>
</dbReference>
<dbReference type="PRINTS" id="PR00474">
    <property type="entry name" value="GLU5KINASE"/>
</dbReference>
<dbReference type="SUPFAM" id="SSF53633">
    <property type="entry name" value="Carbamate kinase-like"/>
    <property type="match status" value="1"/>
</dbReference>
<comment type="function">
    <text evidence="1">Catalyzes the ATP-dependent phosphorylation of N-acetyl-L-glutamate.</text>
</comment>
<comment type="catalytic activity">
    <reaction evidence="1">
        <text>N-acetyl-L-glutamate + ATP = N-acetyl-L-glutamyl 5-phosphate + ADP</text>
        <dbReference type="Rhea" id="RHEA:14629"/>
        <dbReference type="ChEBI" id="CHEBI:30616"/>
        <dbReference type="ChEBI" id="CHEBI:44337"/>
        <dbReference type="ChEBI" id="CHEBI:57936"/>
        <dbReference type="ChEBI" id="CHEBI:456216"/>
        <dbReference type="EC" id="2.7.2.8"/>
    </reaction>
</comment>
<comment type="pathway">
    <text evidence="1">Amino-acid biosynthesis; L-arginine biosynthesis; N(2)-acetyl-L-ornithine from L-glutamate: step 2/4.</text>
</comment>
<comment type="subcellular location">
    <subcellularLocation>
        <location evidence="1">Cytoplasm</location>
    </subcellularLocation>
</comment>
<comment type="similarity">
    <text evidence="1">Belongs to the acetylglutamate kinase family. ArgB subfamily.</text>
</comment>
<evidence type="ECO:0000255" key="1">
    <source>
        <dbReference type="HAMAP-Rule" id="MF_00082"/>
    </source>
</evidence>
<name>ARGB_METAR</name>
<proteinExistence type="inferred from homology"/>
<accession>Q0W0P5</accession>
<organism>
    <name type="scientific">Methanocella arvoryzae (strain DSM 22066 / NBRC 105507 / MRE50)</name>
    <dbReference type="NCBI Taxonomy" id="351160"/>
    <lineage>
        <taxon>Archaea</taxon>
        <taxon>Methanobacteriati</taxon>
        <taxon>Methanobacteriota</taxon>
        <taxon>Stenosarchaea group</taxon>
        <taxon>Methanomicrobia</taxon>
        <taxon>Methanocellales</taxon>
        <taxon>Methanocellaceae</taxon>
        <taxon>Methanocella</taxon>
    </lineage>
</organism>